<organismHost>
    <name type="scientific">Mycobacterium</name>
    <dbReference type="NCBI Taxonomy" id="1763"/>
</organismHost>
<feature type="chain" id="PRO_0000164759" description="Gene 37 protein">
    <location>
        <begin position="1"/>
        <end position="114"/>
    </location>
</feature>
<reference key="1">
    <citation type="journal article" date="1993" name="Mol. Microbiol.">
        <title>DNA sequence, structure and gene expression of mycobacteriophage L5: a phage system for mycobacterial genetics.</title>
        <authorList>
            <person name="Hatfull G.F."/>
            <person name="Sarkis G.J."/>
        </authorList>
    </citation>
    <scope>NUCLEOTIDE SEQUENCE [LARGE SCALE GENOMIC DNA]</scope>
</reference>
<proteinExistence type="predicted"/>
<keyword id="KW-1185">Reference proteome</keyword>
<sequence>MHVDIYQIAASDTAIYPGAGDCDSIEGLSYVTMGLVGEAGEIANKVKKILRDKDGVITQENRDDLQAELGDVMWYVAQLANQLDVWLSTVTQRNLNKLQSRKDRGVIQGSGDNR</sequence>
<name>VG37_BPML5</name>
<organism>
    <name type="scientific">Mycobacterium phage L5</name>
    <name type="common">Mycobacteriophage L5</name>
    <dbReference type="NCBI Taxonomy" id="31757"/>
    <lineage>
        <taxon>Viruses</taxon>
        <taxon>Duplodnaviria</taxon>
        <taxon>Heunggongvirae</taxon>
        <taxon>Uroviricota</taxon>
        <taxon>Caudoviricetes</taxon>
        <taxon>Fromanvirus</taxon>
    </lineage>
</organism>
<protein>
    <recommendedName>
        <fullName>Gene 37 protein</fullName>
    </recommendedName>
    <alternativeName>
        <fullName>Gp37</fullName>
    </alternativeName>
</protein>
<accession>Q05247</accession>
<dbReference type="EMBL" id="Z18946">
    <property type="protein sequence ID" value="CAA79413.1"/>
    <property type="molecule type" value="Genomic_DNA"/>
</dbReference>
<dbReference type="PIR" id="S30982">
    <property type="entry name" value="S30982"/>
</dbReference>
<dbReference type="RefSeq" id="NP_039701.1">
    <property type="nucleotide sequence ID" value="NC_001335.1"/>
</dbReference>
<dbReference type="SMR" id="Q05247"/>
<dbReference type="GeneID" id="2942986"/>
<dbReference type="KEGG" id="vg:2942986"/>
<dbReference type="OrthoDB" id="15178at10239"/>
<dbReference type="Proteomes" id="UP000002123">
    <property type="component" value="Genome"/>
</dbReference>
<dbReference type="CDD" id="cd11541">
    <property type="entry name" value="NTP-PPase_u4"/>
    <property type="match status" value="1"/>
</dbReference>
<dbReference type="Gene3D" id="1.10.287.1080">
    <property type="entry name" value="MazG-like"/>
    <property type="match status" value="1"/>
</dbReference>
<dbReference type="InterPro" id="IPR004518">
    <property type="entry name" value="MazG-like_dom"/>
</dbReference>
<dbReference type="InterPro" id="IPR011379">
    <property type="entry name" value="MazG-related_GP37"/>
</dbReference>
<dbReference type="Pfam" id="PF03819">
    <property type="entry name" value="MazG"/>
    <property type="match status" value="1"/>
</dbReference>
<dbReference type="PIRSF" id="PIRSF006639">
    <property type="entry name" value="UCP006639_pph"/>
    <property type="match status" value="1"/>
</dbReference>
<dbReference type="SUPFAM" id="SSF101386">
    <property type="entry name" value="all-alpha NTP pyrophosphatases"/>
    <property type="match status" value="1"/>
</dbReference>
<gene>
    <name type="primary">37</name>
</gene>